<feature type="chain" id="PRO_1000115934" description="Enolase">
    <location>
        <begin position="1"/>
        <end position="430"/>
    </location>
</feature>
<feature type="active site" description="Proton donor" evidence="1">
    <location>
        <position position="207"/>
    </location>
</feature>
<feature type="active site" description="Proton acceptor" evidence="1">
    <location>
        <position position="339"/>
    </location>
</feature>
<feature type="binding site" evidence="1">
    <location>
        <position position="165"/>
    </location>
    <ligand>
        <name>(2R)-2-phosphoglycerate</name>
        <dbReference type="ChEBI" id="CHEBI:58289"/>
    </ligand>
</feature>
<feature type="binding site" evidence="1">
    <location>
        <position position="244"/>
    </location>
    <ligand>
        <name>Mg(2+)</name>
        <dbReference type="ChEBI" id="CHEBI:18420"/>
    </ligand>
</feature>
<feature type="binding site" evidence="1">
    <location>
        <position position="287"/>
    </location>
    <ligand>
        <name>Mg(2+)</name>
        <dbReference type="ChEBI" id="CHEBI:18420"/>
    </ligand>
</feature>
<feature type="binding site" evidence="1">
    <location>
        <position position="314"/>
    </location>
    <ligand>
        <name>Mg(2+)</name>
        <dbReference type="ChEBI" id="CHEBI:18420"/>
    </ligand>
</feature>
<feature type="binding site" evidence="1">
    <location>
        <position position="339"/>
    </location>
    <ligand>
        <name>(2R)-2-phosphoglycerate</name>
        <dbReference type="ChEBI" id="CHEBI:58289"/>
    </ligand>
</feature>
<feature type="binding site" evidence="1">
    <location>
        <position position="368"/>
    </location>
    <ligand>
        <name>(2R)-2-phosphoglycerate</name>
        <dbReference type="ChEBI" id="CHEBI:58289"/>
    </ligand>
</feature>
<feature type="binding site" evidence="1">
    <location>
        <position position="369"/>
    </location>
    <ligand>
        <name>(2R)-2-phosphoglycerate</name>
        <dbReference type="ChEBI" id="CHEBI:58289"/>
    </ligand>
</feature>
<feature type="binding site" evidence="1">
    <location>
        <position position="390"/>
    </location>
    <ligand>
        <name>(2R)-2-phosphoglycerate</name>
        <dbReference type="ChEBI" id="CHEBI:58289"/>
    </ligand>
</feature>
<accession>B2SUA6</accession>
<gene>
    <name evidence="1" type="primary">eno</name>
    <name type="ordered locus">PXO_00171</name>
</gene>
<sequence length="430" mass="46015">MTTIAKILAREILDSRGNPTLEAEVTLDDGSFGRAAVPSGASTGTKEAVELRDGDKTRYLGKGVRHAVDNVNGTIAETLKNFDAADQQGLDRRLIDLDGTENKGRLGANALLGVSLAAAHAVAASRKQPLWQYLSTITESDVALPVPMMNIINGGAHADNNVDFQEFMVLPVGCSSFSEALRAGTEIFYSLKSVLKGHGLSTAVGDEGGFAPDFRSNVEALDTILEAIGKAGYTAGEDILLGLDVASSEFYDNGKYNLVGENKRLTSEQFVDFLADWVAQYPIISIEDGLAEDDWAGWKLLTDRVGKHVQLVGDDLFVTNPKIFKQGIDSGTANAILIKVNQIGTLTETLEAIAMAHAANYASIVSHRSGETEDTTIADIAVATTATQIKTGSLCRSDRVAKYNQLLRIEQALGSDARYAGRDAFVSIKR</sequence>
<evidence type="ECO:0000255" key="1">
    <source>
        <dbReference type="HAMAP-Rule" id="MF_00318"/>
    </source>
</evidence>
<dbReference type="EC" id="4.2.1.11" evidence="1"/>
<dbReference type="EMBL" id="CP000967">
    <property type="protein sequence ID" value="ACD58296.1"/>
    <property type="molecule type" value="Genomic_DNA"/>
</dbReference>
<dbReference type="RefSeq" id="WP_011408895.1">
    <property type="nucleotide sequence ID" value="NC_010717.2"/>
</dbReference>
<dbReference type="SMR" id="B2SUA6"/>
<dbReference type="KEGG" id="xop:PXO_00171"/>
<dbReference type="eggNOG" id="COG0148">
    <property type="taxonomic scope" value="Bacteria"/>
</dbReference>
<dbReference type="HOGENOM" id="CLU_031223_2_1_6"/>
<dbReference type="UniPathway" id="UPA00109">
    <property type="reaction ID" value="UER00187"/>
</dbReference>
<dbReference type="Proteomes" id="UP000001740">
    <property type="component" value="Chromosome"/>
</dbReference>
<dbReference type="GO" id="GO:0009986">
    <property type="term" value="C:cell surface"/>
    <property type="evidence" value="ECO:0007669"/>
    <property type="project" value="UniProtKB-SubCell"/>
</dbReference>
<dbReference type="GO" id="GO:0005576">
    <property type="term" value="C:extracellular region"/>
    <property type="evidence" value="ECO:0007669"/>
    <property type="project" value="UniProtKB-SubCell"/>
</dbReference>
<dbReference type="GO" id="GO:0000015">
    <property type="term" value="C:phosphopyruvate hydratase complex"/>
    <property type="evidence" value="ECO:0007669"/>
    <property type="project" value="InterPro"/>
</dbReference>
<dbReference type="GO" id="GO:0000287">
    <property type="term" value="F:magnesium ion binding"/>
    <property type="evidence" value="ECO:0007669"/>
    <property type="project" value="UniProtKB-UniRule"/>
</dbReference>
<dbReference type="GO" id="GO:0004634">
    <property type="term" value="F:phosphopyruvate hydratase activity"/>
    <property type="evidence" value="ECO:0007669"/>
    <property type="project" value="UniProtKB-UniRule"/>
</dbReference>
<dbReference type="GO" id="GO:0006096">
    <property type="term" value="P:glycolytic process"/>
    <property type="evidence" value="ECO:0007669"/>
    <property type="project" value="UniProtKB-UniRule"/>
</dbReference>
<dbReference type="CDD" id="cd03313">
    <property type="entry name" value="enolase"/>
    <property type="match status" value="1"/>
</dbReference>
<dbReference type="FunFam" id="3.20.20.120:FF:000001">
    <property type="entry name" value="Enolase"/>
    <property type="match status" value="1"/>
</dbReference>
<dbReference type="FunFam" id="3.30.390.10:FF:000001">
    <property type="entry name" value="Enolase"/>
    <property type="match status" value="1"/>
</dbReference>
<dbReference type="Gene3D" id="3.20.20.120">
    <property type="entry name" value="Enolase-like C-terminal domain"/>
    <property type="match status" value="1"/>
</dbReference>
<dbReference type="Gene3D" id="3.30.390.10">
    <property type="entry name" value="Enolase-like, N-terminal domain"/>
    <property type="match status" value="1"/>
</dbReference>
<dbReference type="HAMAP" id="MF_00318">
    <property type="entry name" value="Enolase"/>
    <property type="match status" value="1"/>
</dbReference>
<dbReference type="InterPro" id="IPR000941">
    <property type="entry name" value="Enolase"/>
</dbReference>
<dbReference type="InterPro" id="IPR036849">
    <property type="entry name" value="Enolase-like_C_sf"/>
</dbReference>
<dbReference type="InterPro" id="IPR029017">
    <property type="entry name" value="Enolase-like_N"/>
</dbReference>
<dbReference type="InterPro" id="IPR020810">
    <property type="entry name" value="Enolase_C"/>
</dbReference>
<dbReference type="InterPro" id="IPR020809">
    <property type="entry name" value="Enolase_CS"/>
</dbReference>
<dbReference type="InterPro" id="IPR020811">
    <property type="entry name" value="Enolase_N"/>
</dbReference>
<dbReference type="NCBIfam" id="TIGR01060">
    <property type="entry name" value="eno"/>
    <property type="match status" value="1"/>
</dbReference>
<dbReference type="PANTHER" id="PTHR11902">
    <property type="entry name" value="ENOLASE"/>
    <property type="match status" value="1"/>
</dbReference>
<dbReference type="PANTHER" id="PTHR11902:SF1">
    <property type="entry name" value="ENOLASE"/>
    <property type="match status" value="1"/>
</dbReference>
<dbReference type="Pfam" id="PF00113">
    <property type="entry name" value="Enolase_C"/>
    <property type="match status" value="1"/>
</dbReference>
<dbReference type="Pfam" id="PF03952">
    <property type="entry name" value="Enolase_N"/>
    <property type="match status" value="1"/>
</dbReference>
<dbReference type="PIRSF" id="PIRSF001400">
    <property type="entry name" value="Enolase"/>
    <property type="match status" value="1"/>
</dbReference>
<dbReference type="PRINTS" id="PR00148">
    <property type="entry name" value="ENOLASE"/>
</dbReference>
<dbReference type="SFLD" id="SFLDS00001">
    <property type="entry name" value="Enolase"/>
    <property type="match status" value="1"/>
</dbReference>
<dbReference type="SFLD" id="SFLDF00002">
    <property type="entry name" value="enolase"/>
    <property type="match status" value="1"/>
</dbReference>
<dbReference type="SMART" id="SM01192">
    <property type="entry name" value="Enolase_C"/>
    <property type="match status" value="1"/>
</dbReference>
<dbReference type="SMART" id="SM01193">
    <property type="entry name" value="Enolase_N"/>
    <property type="match status" value="1"/>
</dbReference>
<dbReference type="SUPFAM" id="SSF51604">
    <property type="entry name" value="Enolase C-terminal domain-like"/>
    <property type="match status" value="1"/>
</dbReference>
<dbReference type="SUPFAM" id="SSF54826">
    <property type="entry name" value="Enolase N-terminal domain-like"/>
    <property type="match status" value="1"/>
</dbReference>
<dbReference type="PROSITE" id="PS00164">
    <property type="entry name" value="ENOLASE"/>
    <property type="match status" value="1"/>
</dbReference>
<organism>
    <name type="scientific">Xanthomonas oryzae pv. oryzae (strain PXO99A)</name>
    <dbReference type="NCBI Taxonomy" id="360094"/>
    <lineage>
        <taxon>Bacteria</taxon>
        <taxon>Pseudomonadati</taxon>
        <taxon>Pseudomonadota</taxon>
        <taxon>Gammaproteobacteria</taxon>
        <taxon>Lysobacterales</taxon>
        <taxon>Lysobacteraceae</taxon>
        <taxon>Xanthomonas</taxon>
    </lineage>
</organism>
<comment type="function">
    <text evidence="1">Catalyzes the reversible conversion of 2-phosphoglycerate (2-PG) into phosphoenolpyruvate (PEP). It is essential for the degradation of carbohydrates via glycolysis.</text>
</comment>
<comment type="catalytic activity">
    <reaction evidence="1">
        <text>(2R)-2-phosphoglycerate = phosphoenolpyruvate + H2O</text>
        <dbReference type="Rhea" id="RHEA:10164"/>
        <dbReference type="ChEBI" id="CHEBI:15377"/>
        <dbReference type="ChEBI" id="CHEBI:58289"/>
        <dbReference type="ChEBI" id="CHEBI:58702"/>
        <dbReference type="EC" id="4.2.1.11"/>
    </reaction>
</comment>
<comment type="cofactor">
    <cofactor evidence="1">
        <name>Mg(2+)</name>
        <dbReference type="ChEBI" id="CHEBI:18420"/>
    </cofactor>
    <text evidence="1">Binds a second Mg(2+) ion via substrate during catalysis.</text>
</comment>
<comment type="pathway">
    <text evidence="1">Carbohydrate degradation; glycolysis; pyruvate from D-glyceraldehyde 3-phosphate: step 4/5.</text>
</comment>
<comment type="subunit">
    <text evidence="1">Component of the RNA degradosome, a multiprotein complex involved in RNA processing and mRNA degradation.</text>
</comment>
<comment type="subcellular location">
    <subcellularLocation>
        <location evidence="1">Cytoplasm</location>
    </subcellularLocation>
    <subcellularLocation>
        <location evidence="1">Secreted</location>
    </subcellularLocation>
    <subcellularLocation>
        <location evidence="1">Cell surface</location>
    </subcellularLocation>
    <text evidence="1">Fractions of enolase are present in both the cytoplasm and on the cell surface.</text>
</comment>
<comment type="similarity">
    <text evidence="1">Belongs to the enolase family.</text>
</comment>
<protein>
    <recommendedName>
        <fullName evidence="1">Enolase</fullName>
        <ecNumber evidence="1">4.2.1.11</ecNumber>
    </recommendedName>
    <alternativeName>
        <fullName evidence="1">2-phospho-D-glycerate hydro-lyase</fullName>
    </alternativeName>
    <alternativeName>
        <fullName evidence="1">2-phosphoglycerate dehydratase</fullName>
    </alternativeName>
</protein>
<name>ENO_XANOP</name>
<proteinExistence type="inferred from homology"/>
<reference key="1">
    <citation type="journal article" date="2008" name="BMC Genomics">
        <title>Genome sequence and rapid evolution of the rice pathogen Xanthomonas oryzae pv. oryzae PXO99A.</title>
        <authorList>
            <person name="Salzberg S.L."/>
            <person name="Sommer D.D."/>
            <person name="Schatz M.C."/>
            <person name="Phillippy A.M."/>
            <person name="Rabinowicz P.D."/>
            <person name="Tsuge S."/>
            <person name="Furutani A."/>
            <person name="Ochiai H."/>
            <person name="Delcher A.L."/>
            <person name="Kelley D."/>
            <person name="Madupu R."/>
            <person name="Puiu D."/>
            <person name="Radune D."/>
            <person name="Shumway M."/>
            <person name="Trapnell C."/>
            <person name="Aparna G."/>
            <person name="Jha G."/>
            <person name="Pandey A."/>
            <person name="Patil P.B."/>
            <person name="Ishihara H."/>
            <person name="Meyer D.F."/>
            <person name="Szurek B."/>
            <person name="Verdier V."/>
            <person name="Koebnik R."/>
            <person name="Dow J.M."/>
            <person name="Ryan R.P."/>
            <person name="Hirata H."/>
            <person name="Tsuyumu S."/>
            <person name="Won Lee S."/>
            <person name="Seo Y.-S."/>
            <person name="Sriariyanum M."/>
            <person name="Ronald P.C."/>
            <person name="Sonti R.V."/>
            <person name="Van Sluys M.-A."/>
            <person name="Leach J.E."/>
            <person name="White F.F."/>
            <person name="Bogdanove A.J."/>
        </authorList>
    </citation>
    <scope>NUCLEOTIDE SEQUENCE [LARGE SCALE GENOMIC DNA]</scope>
    <source>
        <strain>PXO99A</strain>
    </source>
</reference>
<keyword id="KW-0963">Cytoplasm</keyword>
<keyword id="KW-0324">Glycolysis</keyword>
<keyword id="KW-0456">Lyase</keyword>
<keyword id="KW-0460">Magnesium</keyword>
<keyword id="KW-0479">Metal-binding</keyword>
<keyword id="KW-0964">Secreted</keyword>